<evidence type="ECO:0000255" key="1">
    <source>
        <dbReference type="HAMAP-Rule" id="MF_00808"/>
    </source>
</evidence>
<gene>
    <name evidence="1" type="primary">psbT</name>
    <name type="ordered locus">syc0834_d</name>
</gene>
<name>PSBT_SYNP6</name>
<reference key="1">
    <citation type="journal article" date="2007" name="Photosyn. Res.">
        <title>Complete nucleotide sequence of the freshwater unicellular cyanobacterium Synechococcus elongatus PCC 6301 chromosome: gene content and organization.</title>
        <authorList>
            <person name="Sugita C."/>
            <person name="Ogata K."/>
            <person name="Shikata M."/>
            <person name="Jikuya H."/>
            <person name="Takano J."/>
            <person name="Furumichi M."/>
            <person name="Kanehisa M."/>
            <person name="Omata T."/>
            <person name="Sugiura M."/>
            <person name="Sugita M."/>
        </authorList>
    </citation>
    <scope>NUCLEOTIDE SEQUENCE [LARGE SCALE GENOMIC DNA]</scope>
    <source>
        <strain>ATCC 27144 / PCC 6301 / SAUG 1402/1</strain>
    </source>
</reference>
<protein>
    <recommendedName>
        <fullName evidence="1">Photosystem II reaction center protein T</fullName>
        <shortName evidence="1">PSII-T</shortName>
    </recommendedName>
</protein>
<keyword id="KW-0472">Membrane</keyword>
<keyword id="KW-0602">Photosynthesis</keyword>
<keyword id="KW-0604">Photosystem II</keyword>
<keyword id="KW-0793">Thylakoid</keyword>
<keyword id="KW-0812">Transmembrane</keyword>
<keyword id="KW-1133">Transmembrane helix</keyword>
<organism>
    <name type="scientific">Synechococcus sp. (strain ATCC 27144 / PCC 6301 / SAUG 1402/1)</name>
    <name type="common">Anacystis nidulans</name>
    <dbReference type="NCBI Taxonomy" id="269084"/>
    <lineage>
        <taxon>Bacteria</taxon>
        <taxon>Bacillati</taxon>
        <taxon>Cyanobacteriota</taxon>
        <taxon>Cyanophyceae</taxon>
        <taxon>Synechococcales</taxon>
        <taxon>Synechococcaceae</taxon>
        <taxon>Synechococcus</taxon>
    </lineage>
</organism>
<proteinExistence type="inferred from homology"/>
<dbReference type="EMBL" id="AP008231">
    <property type="protein sequence ID" value="BAD79024.1"/>
    <property type="molecule type" value="Genomic_DNA"/>
</dbReference>
<dbReference type="RefSeq" id="WP_011243146.1">
    <property type="nucleotide sequence ID" value="NZ_CP085785.1"/>
</dbReference>
<dbReference type="SMR" id="Q5N3U6"/>
<dbReference type="KEGG" id="syc:syc0834_d"/>
<dbReference type="Proteomes" id="UP000001175">
    <property type="component" value="Chromosome"/>
</dbReference>
<dbReference type="GO" id="GO:0009539">
    <property type="term" value="C:photosystem II reaction center"/>
    <property type="evidence" value="ECO:0007669"/>
    <property type="project" value="InterPro"/>
</dbReference>
<dbReference type="GO" id="GO:0031676">
    <property type="term" value="C:plasma membrane-derived thylakoid membrane"/>
    <property type="evidence" value="ECO:0007669"/>
    <property type="project" value="UniProtKB-SubCell"/>
</dbReference>
<dbReference type="GO" id="GO:0015979">
    <property type="term" value="P:photosynthesis"/>
    <property type="evidence" value="ECO:0007669"/>
    <property type="project" value="UniProtKB-UniRule"/>
</dbReference>
<dbReference type="HAMAP" id="MF_00808">
    <property type="entry name" value="PSII_PsbT"/>
    <property type="match status" value="1"/>
</dbReference>
<dbReference type="InterPro" id="IPR001743">
    <property type="entry name" value="PSII_PsbT"/>
</dbReference>
<dbReference type="InterPro" id="IPR037268">
    <property type="entry name" value="PSII_PsbT_sf"/>
</dbReference>
<dbReference type="NCBIfam" id="NF008825">
    <property type="entry name" value="PRK11875.1"/>
    <property type="match status" value="1"/>
</dbReference>
<dbReference type="PANTHER" id="PTHR36411">
    <property type="match status" value="1"/>
</dbReference>
<dbReference type="PANTHER" id="PTHR36411:SF2">
    <property type="entry name" value="PHOTOSYSTEM II REACTION CENTER PROTEIN T"/>
    <property type="match status" value="1"/>
</dbReference>
<dbReference type="Pfam" id="PF01405">
    <property type="entry name" value="PsbT"/>
    <property type="match status" value="1"/>
</dbReference>
<dbReference type="SUPFAM" id="SSF161029">
    <property type="entry name" value="Photosystem II reaction center protein T, PsbT"/>
    <property type="match status" value="1"/>
</dbReference>
<sequence length="31" mass="3530">MESLVYIFVFVVALGVLFFAIAFREPPRIGK</sequence>
<accession>Q5N3U6</accession>
<feature type="chain" id="PRO_0000218005" description="Photosystem II reaction center protein T">
    <location>
        <begin position="1"/>
        <end position="31"/>
    </location>
</feature>
<feature type="transmembrane region" description="Helical" evidence="1">
    <location>
        <begin position="3"/>
        <end position="23"/>
    </location>
</feature>
<comment type="function">
    <text evidence="1">Found at the monomer-monomer interface of the photosystem II (PS II) dimer, plays a role in assembly and dimerization of PSII. PSII is a light-driven water plastoquinone oxidoreductase, using light energy to abstract electrons from H(2)O, generating a proton gradient subsequently used for ATP formation.</text>
</comment>
<comment type="subunit">
    <text evidence="1">PSII is composed of 1 copy each of membrane proteins PsbA, PsbB, PsbC, PsbD, PsbE, PsbF, PsbH, PsbI, PsbJ, PsbK, PsbL, PsbM, PsbT, PsbX, PsbY, PsbZ, Psb30/Ycf12, peripheral proteins PsbO, CyanoQ (PsbQ), PsbU, PsbV and a large number of cofactors. It forms dimeric complexes.</text>
</comment>
<comment type="subcellular location">
    <subcellularLocation>
        <location evidence="1">Cellular thylakoid membrane</location>
        <topology evidence="1">Single-pass membrane protein</topology>
    </subcellularLocation>
</comment>
<comment type="similarity">
    <text evidence="1">Belongs to the PsbT family.</text>
</comment>